<protein>
    <recommendedName>
        <fullName evidence="1">Protoheme IX farnesyltransferase</fullName>
        <ecNumber evidence="1">2.5.1.141</ecNumber>
    </recommendedName>
    <alternativeName>
        <fullName evidence="1">Heme B farnesyltransferase</fullName>
    </alternativeName>
    <alternativeName>
        <fullName evidence="1">Heme O synthase</fullName>
    </alternativeName>
</protein>
<gene>
    <name evidence="1" type="primary">ctaB</name>
    <name type="ordered locus">Syncc9605_0610</name>
</gene>
<dbReference type="EC" id="2.5.1.141" evidence="1"/>
<dbReference type="EMBL" id="CP000110">
    <property type="protein sequence ID" value="ABB34384.1"/>
    <property type="molecule type" value="Genomic_DNA"/>
</dbReference>
<dbReference type="RefSeq" id="WP_011363614.1">
    <property type="nucleotide sequence ID" value="NC_007516.1"/>
</dbReference>
<dbReference type="SMR" id="Q3ALZ8"/>
<dbReference type="STRING" id="110662.Syncc9605_0610"/>
<dbReference type="KEGG" id="syd:Syncc9605_0610"/>
<dbReference type="eggNOG" id="COG0109">
    <property type="taxonomic scope" value="Bacteria"/>
</dbReference>
<dbReference type="HOGENOM" id="CLU_029631_0_2_3"/>
<dbReference type="OrthoDB" id="9814417at2"/>
<dbReference type="UniPathway" id="UPA00834">
    <property type="reaction ID" value="UER00712"/>
</dbReference>
<dbReference type="GO" id="GO:0005886">
    <property type="term" value="C:plasma membrane"/>
    <property type="evidence" value="ECO:0007669"/>
    <property type="project" value="UniProtKB-SubCell"/>
</dbReference>
<dbReference type="GO" id="GO:0008495">
    <property type="term" value="F:protoheme IX farnesyltransferase activity"/>
    <property type="evidence" value="ECO:0007669"/>
    <property type="project" value="UniProtKB-UniRule"/>
</dbReference>
<dbReference type="GO" id="GO:0048034">
    <property type="term" value="P:heme O biosynthetic process"/>
    <property type="evidence" value="ECO:0007669"/>
    <property type="project" value="UniProtKB-UniRule"/>
</dbReference>
<dbReference type="CDD" id="cd13957">
    <property type="entry name" value="PT_UbiA_Cox10"/>
    <property type="match status" value="1"/>
</dbReference>
<dbReference type="Gene3D" id="1.10.357.140">
    <property type="entry name" value="UbiA prenyltransferase"/>
    <property type="match status" value="1"/>
</dbReference>
<dbReference type="HAMAP" id="MF_00154">
    <property type="entry name" value="CyoE_CtaB"/>
    <property type="match status" value="1"/>
</dbReference>
<dbReference type="InterPro" id="IPR006369">
    <property type="entry name" value="Protohaem_IX_farnesylTrfase"/>
</dbReference>
<dbReference type="InterPro" id="IPR000537">
    <property type="entry name" value="UbiA_prenyltransferase"/>
</dbReference>
<dbReference type="InterPro" id="IPR030470">
    <property type="entry name" value="UbiA_prenylTrfase_CS"/>
</dbReference>
<dbReference type="InterPro" id="IPR044878">
    <property type="entry name" value="UbiA_sf"/>
</dbReference>
<dbReference type="NCBIfam" id="TIGR01473">
    <property type="entry name" value="cyoE_ctaB"/>
    <property type="match status" value="1"/>
</dbReference>
<dbReference type="NCBIfam" id="NF003349">
    <property type="entry name" value="PRK04375.1-2"/>
    <property type="match status" value="1"/>
</dbReference>
<dbReference type="PANTHER" id="PTHR43448:SF7">
    <property type="entry name" value="4-HYDROXYBENZOATE SOLANESYLTRANSFERASE"/>
    <property type="match status" value="1"/>
</dbReference>
<dbReference type="PANTHER" id="PTHR43448">
    <property type="entry name" value="PROTOHEME IX FARNESYLTRANSFERASE, MITOCHONDRIAL"/>
    <property type="match status" value="1"/>
</dbReference>
<dbReference type="Pfam" id="PF01040">
    <property type="entry name" value="UbiA"/>
    <property type="match status" value="1"/>
</dbReference>
<dbReference type="PROSITE" id="PS00943">
    <property type="entry name" value="UBIA"/>
    <property type="match status" value="1"/>
</dbReference>
<reference key="1">
    <citation type="submission" date="2005-07" db="EMBL/GenBank/DDBJ databases">
        <title>Complete sequence of Synechococcus sp. CC9605.</title>
        <authorList>
            <consortium name="US DOE Joint Genome Institute"/>
            <person name="Copeland A."/>
            <person name="Lucas S."/>
            <person name="Lapidus A."/>
            <person name="Barry K."/>
            <person name="Detter J.C."/>
            <person name="Glavina T."/>
            <person name="Hammon N."/>
            <person name="Israni S."/>
            <person name="Pitluck S."/>
            <person name="Schmutz J."/>
            <person name="Martinez M."/>
            <person name="Larimer F."/>
            <person name="Land M."/>
            <person name="Kyrpides N."/>
            <person name="Ivanova N."/>
            <person name="Richardson P."/>
        </authorList>
    </citation>
    <scope>NUCLEOTIDE SEQUENCE [LARGE SCALE GENOMIC DNA]</scope>
    <source>
        <strain>CC9605</strain>
    </source>
</reference>
<evidence type="ECO:0000255" key="1">
    <source>
        <dbReference type="HAMAP-Rule" id="MF_00154"/>
    </source>
</evidence>
<comment type="function">
    <text evidence="1">Converts heme B (protoheme IX) to heme O by substitution of the vinyl group on carbon 2 of heme B porphyrin ring with a hydroxyethyl farnesyl side group.</text>
</comment>
<comment type="catalytic activity">
    <reaction evidence="1">
        <text>heme b + (2E,6E)-farnesyl diphosphate + H2O = Fe(II)-heme o + diphosphate</text>
        <dbReference type="Rhea" id="RHEA:28070"/>
        <dbReference type="ChEBI" id="CHEBI:15377"/>
        <dbReference type="ChEBI" id="CHEBI:33019"/>
        <dbReference type="ChEBI" id="CHEBI:60344"/>
        <dbReference type="ChEBI" id="CHEBI:60530"/>
        <dbReference type="ChEBI" id="CHEBI:175763"/>
        <dbReference type="EC" id="2.5.1.141"/>
    </reaction>
</comment>
<comment type="pathway">
    <text evidence="1">Porphyrin-containing compound metabolism; heme O biosynthesis; heme O from protoheme: step 1/1.</text>
</comment>
<comment type="subcellular location">
    <subcellularLocation>
        <location evidence="1">Cell inner membrane</location>
        <topology evidence="1">Multi-pass membrane protein</topology>
    </subcellularLocation>
</comment>
<comment type="miscellaneous">
    <text evidence="1">Carbon 2 of the heme B porphyrin ring is defined according to the Fischer nomenclature.</text>
</comment>
<comment type="similarity">
    <text evidence="1">Belongs to the UbiA prenyltransferase family. Protoheme IX farnesyltransferase subfamily.</text>
</comment>
<keyword id="KW-0997">Cell inner membrane</keyword>
<keyword id="KW-1003">Cell membrane</keyword>
<keyword id="KW-0350">Heme biosynthesis</keyword>
<keyword id="KW-0472">Membrane</keyword>
<keyword id="KW-0808">Transferase</keyword>
<keyword id="KW-0812">Transmembrane</keyword>
<keyword id="KW-1133">Transmembrane helix</keyword>
<name>COXX_SYNSC</name>
<sequence length="327" mass="34496">MAEITATVRPTREEVVPSRKRVKLPAWLEVAKPRLIPLLLATTLGGMALSEGWPLSSPRLVCTLGGGALASAAAGVLNCLWEQDLDGRMARTSGRALPSGRLSPTSAFIGAIACTLAAAMLLVSGVNCLAAGLSLLGLCSYVLLYTALLKPRTSQNIVIGGVAGAIPPLVGAAAATGHVGLGGWWLFALVMVWTPAHFWALALLLREDYRAVGIPMLPVVKGPVVTARAIKTYGWITVLLSSLGVFALPSGGAFYGVMLLPYNARLLQLVDRLSLDPDSLVNAKALFRWSILYLFGVCLLLILSRTDLASGFTHQVIQLLSLPTGVH</sequence>
<organism>
    <name type="scientific">Synechococcus sp. (strain CC9605)</name>
    <dbReference type="NCBI Taxonomy" id="110662"/>
    <lineage>
        <taxon>Bacteria</taxon>
        <taxon>Bacillati</taxon>
        <taxon>Cyanobacteriota</taxon>
        <taxon>Cyanophyceae</taxon>
        <taxon>Synechococcales</taxon>
        <taxon>Synechococcaceae</taxon>
        <taxon>Synechococcus</taxon>
    </lineage>
</organism>
<feature type="chain" id="PRO_0000327174" description="Protoheme IX farnesyltransferase">
    <location>
        <begin position="1"/>
        <end position="327"/>
    </location>
</feature>
<feature type="transmembrane region" description="Helical" evidence="1">
    <location>
        <begin position="35"/>
        <end position="55"/>
    </location>
</feature>
<feature type="transmembrane region" description="Helical" evidence="1">
    <location>
        <begin position="60"/>
        <end position="80"/>
    </location>
</feature>
<feature type="transmembrane region" description="Helical" evidence="1">
    <location>
        <begin position="106"/>
        <end position="126"/>
    </location>
</feature>
<feature type="transmembrane region" description="Helical" evidence="1">
    <location>
        <begin position="129"/>
        <end position="149"/>
    </location>
</feature>
<feature type="transmembrane region" description="Helical" evidence="1">
    <location>
        <begin position="157"/>
        <end position="177"/>
    </location>
</feature>
<feature type="transmembrane region" description="Helical" evidence="1">
    <location>
        <begin position="185"/>
        <end position="205"/>
    </location>
</feature>
<feature type="transmembrane region" description="Helical" evidence="1">
    <location>
        <begin position="234"/>
        <end position="254"/>
    </location>
</feature>
<feature type="transmembrane region" description="Helical" evidence="1">
    <location>
        <begin position="283"/>
        <end position="303"/>
    </location>
</feature>
<accession>Q3ALZ8</accession>
<proteinExistence type="inferred from homology"/>